<reference key="1">
    <citation type="journal article" date="2005" name="Proc. Natl. Acad. Sci. U.S.A.">
        <title>Evolutionary conservation and diversification of Rh family genes and proteins.</title>
        <authorList>
            <person name="Huang C.-H."/>
            <person name="Peng J."/>
        </authorList>
    </citation>
    <scope>NUCLEOTIDE SEQUENCE [MRNA]</scope>
    <source>
        <tissue>Kidney</tissue>
    </source>
</reference>
<reference key="2">
    <citation type="submission" date="2004-11" db="EMBL/GenBank/DDBJ databases">
        <authorList>
            <consortium name="NIH - Xenopus Gene Collection (XGC) project"/>
        </authorList>
    </citation>
    <scope>NUCLEOTIDE SEQUENCE [LARGE SCALE MRNA]</scope>
    <source>
        <tissue>Kidney</tissue>
    </source>
</reference>
<evidence type="ECO:0000250" key="1"/>
<evidence type="ECO:0000255" key="2"/>
<evidence type="ECO:0000305" key="3"/>
<name>RHBGA_XENLA</name>
<dbReference type="EMBL" id="AY353246">
    <property type="protein sequence ID" value="AAR08675.1"/>
    <property type="molecule type" value="mRNA"/>
</dbReference>
<dbReference type="EMBL" id="BC059979">
    <property type="protein sequence ID" value="AAH59979.1"/>
    <property type="status" value="ALT_INIT"/>
    <property type="molecule type" value="mRNA"/>
</dbReference>
<dbReference type="EMBL" id="BC086275">
    <property type="protein sequence ID" value="AAH86275.1"/>
    <property type="status" value="ALT_INIT"/>
    <property type="molecule type" value="mRNA"/>
</dbReference>
<dbReference type="RefSeq" id="NP_001083174.1">
    <property type="nucleotide sequence ID" value="NM_001089705.1"/>
</dbReference>
<dbReference type="SMR" id="Q69D48"/>
<dbReference type="GlyCosmos" id="Q69D48">
    <property type="glycosylation" value="1 site, No reported glycans"/>
</dbReference>
<dbReference type="DNASU" id="398784"/>
<dbReference type="GeneID" id="398784"/>
<dbReference type="KEGG" id="xla:398784"/>
<dbReference type="AGR" id="Xenbase:XB-GENE-6255430"/>
<dbReference type="CTD" id="398784"/>
<dbReference type="Xenbase" id="XB-GENE-6255430">
    <property type="gene designation" value="rhbg.L"/>
</dbReference>
<dbReference type="OrthoDB" id="534912at2759"/>
<dbReference type="Proteomes" id="UP000186698">
    <property type="component" value="Chromosome 8L"/>
</dbReference>
<dbReference type="Bgee" id="398784">
    <property type="expression patterns" value="Expressed in kidney and 11 other cell types or tissues"/>
</dbReference>
<dbReference type="GO" id="GO:0016323">
    <property type="term" value="C:basolateral plasma membrane"/>
    <property type="evidence" value="ECO:0007669"/>
    <property type="project" value="UniProtKB-SubCell"/>
</dbReference>
<dbReference type="GO" id="GO:0030659">
    <property type="term" value="C:cytoplasmic vesicle membrane"/>
    <property type="evidence" value="ECO:0007669"/>
    <property type="project" value="UniProtKB-SubCell"/>
</dbReference>
<dbReference type="GO" id="GO:0005886">
    <property type="term" value="C:plasma membrane"/>
    <property type="evidence" value="ECO:0000318"/>
    <property type="project" value="GO_Central"/>
</dbReference>
<dbReference type="GO" id="GO:0008519">
    <property type="term" value="F:ammonium channel activity"/>
    <property type="evidence" value="ECO:0000318"/>
    <property type="project" value="GO_Central"/>
</dbReference>
<dbReference type="GO" id="GO:0097272">
    <property type="term" value="P:ammonium homeostasis"/>
    <property type="evidence" value="ECO:0000318"/>
    <property type="project" value="GO_Central"/>
</dbReference>
<dbReference type="GO" id="GO:0072488">
    <property type="term" value="P:ammonium transmembrane transport"/>
    <property type="evidence" value="ECO:0000318"/>
    <property type="project" value="GO_Central"/>
</dbReference>
<dbReference type="FunFam" id="1.10.3430.10:FF:000001">
    <property type="entry name" value="Ammonium transporter Rh type C"/>
    <property type="match status" value="1"/>
</dbReference>
<dbReference type="Gene3D" id="1.10.3430.10">
    <property type="entry name" value="Ammonium transporter AmtB like domains"/>
    <property type="match status" value="1"/>
</dbReference>
<dbReference type="InterPro" id="IPR029020">
    <property type="entry name" value="Ammonium/urea_transptr"/>
</dbReference>
<dbReference type="InterPro" id="IPR024041">
    <property type="entry name" value="NH4_transpt_AmtB-like_dom"/>
</dbReference>
<dbReference type="InterPro" id="IPR002229">
    <property type="entry name" value="RhesusRHD"/>
</dbReference>
<dbReference type="PANTHER" id="PTHR11730">
    <property type="entry name" value="AMMONIUM TRANSPORTER"/>
    <property type="match status" value="1"/>
</dbReference>
<dbReference type="PANTHER" id="PTHR11730:SF42">
    <property type="entry name" value="AMMONIUM TRANSPORTER RH TYPE B"/>
    <property type="match status" value="1"/>
</dbReference>
<dbReference type="Pfam" id="PF00909">
    <property type="entry name" value="Ammonium_transp"/>
    <property type="match status" value="1"/>
</dbReference>
<dbReference type="PRINTS" id="PR00342">
    <property type="entry name" value="RHESUSRHD"/>
</dbReference>
<dbReference type="SUPFAM" id="SSF111352">
    <property type="entry name" value="Ammonium transporter"/>
    <property type="match status" value="1"/>
</dbReference>
<keyword id="KW-0924">Ammonia transport</keyword>
<keyword id="KW-1003">Cell membrane</keyword>
<keyword id="KW-0968">Cytoplasmic vesicle</keyword>
<keyword id="KW-0325">Glycoprotein</keyword>
<keyword id="KW-0472">Membrane</keyword>
<keyword id="KW-1185">Reference proteome</keyword>
<keyword id="KW-0812">Transmembrane</keyword>
<keyword id="KW-1133">Transmembrane helix</keyword>
<keyword id="KW-0813">Transport</keyword>
<organism>
    <name type="scientific">Xenopus laevis</name>
    <name type="common">African clawed frog</name>
    <dbReference type="NCBI Taxonomy" id="8355"/>
    <lineage>
        <taxon>Eukaryota</taxon>
        <taxon>Metazoa</taxon>
        <taxon>Chordata</taxon>
        <taxon>Craniata</taxon>
        <taxon>Vertebrata</taxon>
        <taxon>Euteleostomi</taxon>
        <taxon>Amphibia</taxon>
        <taxon>Batrachia</taxon>
        <taxon>Anura</taxon>
        <taxon>Pipoidea</taxon>
        <taxon>Pipidae</taxon>
        <taxon>Xenopodinae</taxon>
        <taxon>Xenopus</taxon>
        <taxon>Xenopus</taxon>
    </lineage>
</organism>
<feature type="chain" id="PRO_0000283610" description="Ammonium transporter Rh type B-A">
    <location>
        <begin position="1"/>
        <end position="460"/>
    </location>
</feature>
<feature type="topological domain" description="Cytoplasmic" evidence="2">
    <location>
        <begin position="1"/>
        <end position="10"/>
    </location>
</feature>
<feature type="transmembrane region" description="Helical" evidence="2">
    <location>
        <begin position="11"/>
        <end position="31"/>
    </location>
</feature>
<feature type="topological domain" description="Extracellular" evidence="2">
    <location>
        <begin position="32"/>
        <end position="62"/>
    </location>
</feature>
<feature type="transmembrane region" description="Helical" evidence="2">
    <location>
        <begin position="63"/>
        <end position="83"/>
    </location>
</feature>
<feature type="topological domain" description="Cytoplasmic" evidence="2">
    <location>
        <begin position="84"/>
        <end position="87"/>
    </location>
</feature>
<feature type="transmembrane region" description="Helical" evidence="2">
    <location>
        <begin position="88"/>
        <end position="108"/>
    </location>
</feature>
<feature type="topological domain" description="Extracellular" evidence="2">
    <location>
        <begin position="109"/>
        <end position="125"/>
    </location>
</feature>
<feature type="transmembrane region" description="Helical" evidence="2">
    <location>
        <begin position="126"/>
        <end position="146"/>
    </location>
</feature>
<feature type="topological domain" description="Cytoplasmic" evidence="2">
    <location>
        <begin position="147"/>
        <end position="150"/>
    </location>
</feature>
<feature type="transmembrane region" description="Helical" evidence="2">
    <location>
        <begin position="151"/>
        <end position="171"/>
    </location>
</feature>
<feature type="topological domain" description="Extracellular" evidence="2">
    <location>
        <begin position="172"/>
        <end position="179"/>
    </location>
</feature>
<feature type="transmembrane region" description="Helical" evidence="2">
    <location>
        <begin position="180"/>
        <end position="202"/>
    </location>
</feature>
<feature type="topological domain" description="Cytoplasmic" evidence="2">
    <location>
        <begin position="203"/>
        <end position="220"/>
    </location>
</feature>
<feature type="transmembrane region" description="Helical" evidence="2">
    <location>
        <begin position="221"/>
        <end position="241"/>
    </location>
</feature>
<feature type="topological domain" description="Extracellular" evidence="2">
    <location>
        <begin position="242"/>
        <end position="252"/>
    </location>
</feature>
<feature type="transmembrane region" description="Helical" evidence="2">
    <location>
        <begin position="253"/>
        <end position="273"/>
    </location>
</feature>
<feature type="topological domain" description="Cytoplasmic" evidence="2">
    <location>
        <begin position="274"/>
        <end position="283"/>
    </location>
</feature>
<feature type="transmembrane region" description="Helical" evidence="2">
    <location>
        <begin position="284"/>
        <end position="304"/>
    </location>
</feature>
<feature type="topological domain" description="Extracellular" evidence="2">
    <location>
        <position position="305"/>
    </location>
</feature>
<feature type="transmembrane region" description="Helical" evidence="2">
    <location>
        <begin position="306"/>
        <end position="326"/>
    </location>
</feature>
<feature type="topological domain" description="Cytoplasmic" evidence="2">
    <location>
        <begin position="327"/>
        <end position="347"/>
    </location>
</feature>
<feature type="transmembrane region" description="Helical" evidence="2">
    <location>
        <begin position="348"/>
        <end position="368"/>
    </location>
</feature>
<feature type="topological domain" description="Extracellular" evidence="2">
    <location>
        <begin position="369"/>
        <end position="394"/>
    </location>
</feature>
<feature type="transmembrane region" description="Helical" evidence="2">
    <location>
        <begin position="395"/>
        <end position="415"/>
    </location>
</feature>
<feature type="topological domain" description="Cytoplasmic" evidence="2">
    <location>
        <begin position="416"/>
        <end position="460"/>
    </location>
</feature>
<feature type="glycosylation site" description="N-linked (GlcNAc...) asparagine" evidence="2">
    <location>
        <position position="48"/>
    </location>
</feature>
<proteinExistence type="evidence at transcript level"/>
<protein>
    <recommendedName>
        <fullName>Ammonium transporter Rh type B-A</fullName>
    </recommendedName>
    <alternativeName>
        <fullName>Rhesus blood group family type B glycoprotein A</fullName>
        <shortName>Rh family type B glycoprotein A</shortName>
        <shortName>Rh type B glycoprotein A</shortName>
    </alternativeName>
</protein>
<gene>
    <name type="primary">rhbg-a</name>
</gene>
<comment type="function">
    <text evidence="1">Functions as a specific ammonium transporter.</text>
</comment>
<comment type="subcellular location">
    <subcellularLocation>
        <location evidence="1">Basolateral cell membrane</location>
        <topology evidence="1">Multi-pass membrane protein</topology>
    </subcellularLocation>
    <subcellularLocation>
        <location evidence="1">Cytoplasmic vesicle membrane</location>
        <topology evidence="1">Multi-pass membrane protein</topology>
    </subcellularLocation>
</comment>
<comment type="similarity">
    <text evidence="3">Belongs to the ammonium transporter (TC 2.A.49) family. Rh subfamily.</text>
</comment>
<comment type="sequence caution" evidence="3">
    <conflict type="erroneous initiation">
        <sequence resource="EMBL-CDS" id="AAH59979"/>
    </conflict>
</comment>
<comment type="sequence caution" evidence="3">
    <conflict type="erroneous initiation">
        <sequence resource="EMBL-CDS" id="AAH86275"/>
    </conflict>
</comment>
<sequence>MTGYSTNMRIKLPLFCLILQFITIILFAVFVRYDHESDARGWHDELKNHSTANADNDFYFRYPSFQDVHVMIFIGFGFLMTFLKRYGFSSVAFNFLIAAFGLQWSTLIQGFFHGFHDGKIHVGIESMINADFCTGAVLISFGAVLGKTSPVQLIVMTLIEVTLFGINEYIILNIVGAKDAGGSMTIHTFGAYFGLIVSRVLYRADLDKSRQREGSVYHSDLFAMIGTIYLWMFWPSFNSAVTAHGDDQHRTVLNTYYSLAACTLATFGFSALLNGEGKLDMVHIQNAALAGGVAVGTSGEMMLTPFGAMIAGTLAGIVSVLGYKYLTPVLDSKLKIQDTCGVHNLHGMPGILGAVIGAIVALFATADIYGDGMDDVFPMIFDGSRTAKQQSLYQFLALLVALGFAIVGGTVVGFILKLPLFGTPSDAECFEDAVYWEVPGGEGHQQLTVVVNNEDPDTQA</sequence>
<accession>Q69D48</accession>
<accession>Q6PB05</accession>